<evidence type="ECO:0000250" key="1">
    <source>
        <dbReference type="UniProtKB" id="P27621"/>
    </source>
</evidence>
<evidence type="ECO:0000269" key="2">
    <source>
    </source>
</evidence>
<evidence type="ECO:0000305" key="3"/>
<evidence type="ECO:0000305" key="4">
    <source>
    </source>
</evidence>
<evidence type="ECO:0000312" key="5">
    <source>
        <dbReference type="EMBL" id="ABD29778.1"/>
    </source>
</evidence>
<evidence type="ECO:0000312" key="6">
    <source>
        <dbReference type="Proteomes" id="UP000008816"/>
    </source>
</evidence>
<proteinExistence type="evidence at protein level"/>
<reference key="1">
    <citation type="book" date="2006" name="Gram positive pathogens, 2nd edition">
        <title>The Staphylococcus aureus NCTC 8325 genome.</title>
        <editorList>
            <person name="Fischetti V."/>
            <person name="Novick R."/>
            <person name="Ferretti J."/>
            <person name="Portnoy D."/>
            <person name="Rood J."/>
        </editorList>
        <authorList>
            <person name="Gillaspy A.F."/>
            <person name="Worrell V."/>
            <person name="Orvis J."/>
            <person name="Roe B.A."/>
            <person name="Dyer D.W."/>
            <person name="Iandolo J.J."/>
        </authorList>
    </citation>
    <scope>NUCLEOTIDE SEQUENCE [LARGE SCALE GENOMIC DNA]</scope>
    <source>
        <strain evidence="6">NCTC 8325 / PS 47</strain>
    </source>
</reference>
<reference key="2">
    <citation type="journal article" date="2008" name="Chem. Biol.">
        <title>A revised pathway proposed for Staphylococcus aureus wall teichoic acid biosynthesis based on in vitro reconstitution of the intracellular steps.</title>
        <authorList>
            <person name="Brown S."/>
            <person name="Zhang Y.H."/>
            <person name="Walker S."/>
        </authorList>
    </citation>
    <scope>FUNCTION</scope>
    <scope>CATALYTIC ACTIVITY</scope>
    <scope>PATHWAY</scope>
    <source>
        <strain>NCTC 8325 / PS 47</strain>
    </source>
</reference>
<feature type="chain" id="PRO_0000438713" description="Teichoic acid glycerol-phosphate primase">
    <location>
        <begin position="1"/>
        <end position="367"/>
    </location>
</feature>
<keyword id="KW-1003">Cell membrane</keyword>
<keyword id="KW-0961">Cell wall biogenesis/degradation</keyword>
<keyword id="KW-0472">Membrane</keyword>
<keyword id="KW-1185">Reference proteome</keyword>
<keyword id="KW-0777">Teichoic acid biosynthesis</keyword>
<keyword id="KW-0808">Transferase</keyword>
<organism>
    <name type="scientific">Staphylococcus aureus (strain NCTC 8325 / PS 47)</name>
    <dbReference type="NCBI Taxonomy" id="93061"/>
    <lineage>
        <taxon>Bacteria</taxon>
        <taxon>Bacillati</taxon>
        <taxon>Bacillota</taxon>
        <taxon>Bacilli</taxon>
        <taxon>Bacillales</taxon>
        <taxon>Staphylococcaceae</taxon>
        <taxon>Staphylococcus</taxon>
    </lineage>
</organism>
<dbReference type="EC" id="2.7.8.44" evidence="2"/>
<dbReference type="EMBL" id="CP000253">
    <property type="protein sequence ID" value="ABD29778.1"/>
    <property type="molecule type" value="Genomic_DNA"/>
</dbReference>
<dbReference type="RefSeq" id="WP_001101603.1">
    <property type="nucleotide sequence ID" value="NZ_LS483365.1"/>
</dbReference>
<dbReference type="RefSeq" id="YP_499203.1">
    <property type="nucleotide sequence ID" value="NC_007795.1"/>
</dbReference>
<dbReference type="SMR" id="Q2G2X4"/>
<dbReference type="STRING" id="93061.SAOUHSC_00643"/>
<dbReference type="PaxDb" id="1280-SAXN108_0707"/>
<dbReference type="GeneID" id="3920051"/>
<dbReference type="KEGG" id="sao:SAOUHSC_00643"/>
<dbReference type="PATRIC" id="fig|93061.5.peg.577"/>
<dbReference type="eggNOG" id="COG1887">
    <property type="taxonomic scope" value="Bacteria"/>
</dbReference>
<dbReference type="HOGENOM" id="CLU_029598_0_1_9"/>
<dbReference type="OrthoDB" id="9811865at2"/>
<dbReference type="BioCyc" id="MetaCyc:MONOMER-19983"/>
<dbReference type="BRENDA" id="2.7.8.44">
    <property type="organism ID" value="3352"/>
</dbReference>
<dbReference type="UniPathway" id="UPA00790"/>
<dbReference type="Proteomes" id="UP000008816">
    <property type="component" value="Chromosome"/>
</dbReference>
<dbReference type="GO" id="GO:0005886">
    <property type="term" value="C:plasma membrane"/>
    <property type="evidence" value="ECO:0007669"/>
    <property type="project" value="UniProtKB-SubCell"/>
</dbReference>
<dbReference type="GO" id="GO:0047355">
    <property type="term" value="F:CDP-glycerol glycerophosphotransferase activity"/>
    <property type="evidence" value="ECO:0007669"/>
    <property type="project" value="InterPro"/>
</dbReference>
<dbReference type="GO" id="GO:0071555">
    <property type="term" value="P:cell wall organization"/>
    <property type="evidence" value="ECO:0007669"/>
    <property type="project" value="UniProtKB-KW"/>
</dbReference>
<dbReference type="GO" id="GO:0019350">
    <property type="term" value="P:teichoic acid biosynthetic process"/>
    <property type="evidence" value="ECO:0007669"/>
    <property type="project" value="UniProtKB-KW"/>
</dbReference>
<dbReference type="Gene3D" id="3.40.50.11820">
    <property type="match status" value="1"/>
</dbReference>
<dbReference type="Gene3D" id="3.40.50.12580">
    <property type="match status" value="1"/>
</dbReference>
<dbReference type="InterPro" id="IPR007554">
    <property type="entry name" value="Glycerophosphate_synth"/>
</dbReference>
<dbReference type="InterPro" id="IPR043148">
    <property type="entry name" value="TagF_C"/>
</dbReference>
<dbReference type="InterPro" id="IPR043149">
    <property type="entry name" value="TagF_N"/>
</dbReference>
<dbReference type="InterPro" id="IPR049698">
    <property type="entry name" value="TarB"/>
</dbReference>
<dbReference type="InterPro" id="IPR051612">
    <property type="entry name" value="Teichoic_Acid_Biosynth"/>
</dbReference>
<dbReference type="NCBIfam" id="NF041711">
    <property type="entry name" value="TagprimaseTarB"/>
    <property type="match status" value="1"/>
</dbReference>
<dbReference type="PANTHER" id="PTHR37316">
    <property type="entry name" value="TEICHOIC ACID GLYCEROL-PHOSPHATE PRIMASE"/>
    <property type="match status" value="1"/>
</dbReference>
<dbReference type="PANTHER" id="PTHR37316:SF1">
    <property type="entry name" value="TEICHOIC ACID GLYCEROL-PHOSPHATE PRIMASE"/>
    <property type="match status" value="1"/>
</dbReference>
<dbReference type="Pfam" id="PF04464">
    <property type="entry name" value="Glyphos_transf"/>
    <property type="match status" value="1"/>
</dbReference>
<dbReference type="SUPFAM" id="SSF53756">
    <property type="entry name" value="UDP-Glycosyltransferase/glycogen phosphorylase"/>
    <property type="match status" value="1"/>
</dbReference>
<comment type="function">
    <text evidence="2">Catalyzes the addition of a single glycerol phosphate residue to the prenoldiphosphate-linked disaccharide.</text>
</comment>
<comment type="catalytic activity">
    <reaction evidence="2">
        <text>N-acetyl-beta-D-mannosaminyl-(1-&gt;4)-N-acetyl-alpha-D-glucosaminyl di-trans,octa-cis-undecaprenyl diphosphate + CDP-glycerol = 4-O-[(2R)-glycerylphospho]-N-acetyl-beta-D-mannosaminyl-(1-&gt;4)-N-acetyl-alpha-D-glucosaminyl di-trans,octa-cis-undecaprenyl diphosphate + CMP + H(+)</text>
        <dbReference type="Rhea" id="RHEA:33815"/>
        <dbReference type="ChEBI" id="CHEBI:15378"/>
        <dbReference type="ChEBI" id="CHEBI:58311"/>
        <dbReference type="ChEBI" id="CHEBI:60377"/>
        <dbReference type="ChEBI" id="CHEBI:132210"/>
        <dbReference type="ChEBI" id="CHEBI:132211"/>
        <dbReference type="EC" id="2.7.8.44"/>
    </reaction>
</comment>
<comment type="pathway">
    <text evidence="4">Cell wall biogenesis; poly(ribitol phosphate) teichoic acid biosynthesis.</text>
</comment>
<comment type="subcellular location">
    <subcellularLocation>
        <location evidence="1">Cell membrane</location>
        <topology evidence="1">Peripheral membrane protein</topology>
        <orientation evidence="1">Cytoplasmic side</orientation>
    </subcellularLocation>
</comment>
<comment type="similarity">
    <text evidence="3">Belongs to the CDP-glycerol glycerophosphotransferase family.</text>
</comment>
<gene>
    <name type="primary">tarB</name>
    <name evidence="5" type="ordered locus">SAOUHSC_00643</name>
</gene>
<name>TARB_STAA8</name>
<accession>Q2G2X4</accession>
<sequence length="367" mass="42436">MNVLIKKFYHLVVRILSKMITPQVIDKPHIVFMMTFPEDIKPIIKALNNSSYQKTVLTTPKQAPYLSELSDDVDVIEMTNRTLVKQIKALKSAQMIIIDNYYLLLGGYNKTSNQHIVQTWHASGALKNFGLTDHQVDVSDKAMVQQYRKVYQATDFYLVGCEQMSQCFKQSLGATEEQMLYFGLPRINKYYTADRATVKAELKDKYGITNKLVLYVPTYREDKADNRAIDKAYFEKCLPGYTLINKLHPSIEDSDIDDVSSIDTSTLMLMSDIIISDYSSLPIEASLLDIPTIFYVYDEGTYDQVRGLNQFYKAIPDSYKVYTEEDLIMTIQEKEHLLSPLFKDWHKYNTDKSLHQLTEYIDKMVTK</sequence>
<protein>
    <recommendedName>
        <fullName evidence="3">Teichoic acid glycerol-phosphate primase</fullName>
        <ecNumber evidence="2">2.7.8.44</ecNumber>
    </recommendedName>
    <alternativeName>
        <fullName>CDP-glycerol:N-acetyl-beta-D-mannosaminyl-1,4-N-acetyl-D-glucosaminyldiphosphoundecaprenyl glycerophosphotransferase</fullName>
    </alternativeName>
    <alternativeName>
        <fullName evidence="3">Tag primase</fullName>
    </alternativeName>
</protein>